<name>THIG_ECTM1</name>
<evidence type="ECO:0000255" key="1">
    <source>
        <dbReference type="HAMAP-Rule" id="MF_00443"/>
    </source>
</evidence>
<protein>
    <recommendedName>
        <fullName evidence="1">Thiazole synthase</fullName>
        <ecNumber evidence="1">2.8.1.10</ecNumber>
    </recommendedName>
</protein>
<gene>
    <name evidence="1" type="primary">thiG</name>
    <name type="ordered locus">Pmen_4167</name>
</gene>
<comment type="function">
    <text evidence="1">Catalyzes the rearrangement of 1-deoxy-D-xylulose 5-phosphate (DXP) to produce the thiazole phosphate moiety of thiamine. Sulfur is provided by the thiocarboxylate moiety of the carrier protein ThiS. In vitro, sulfur can be provided by H(2)S.</text>
</comment>
<comment type="catalytic activity">
    <reaction evidence="1">
        <text>[ThiS sulfur-carrier protein]-C-terminal-Gly-aminoethanethioate + 2-iminoacetate + 1-deoxy-D-xylulose 5-phosphate = [ThiS sulfur-carrier protein]-C-terminal Gly-Gly + 2-[(2R,5Z)-2-carboxy-4-methylthiazol-5(2H)-ylidene]ethyl phosphate + 2 H2O + H(+)</text>
        <dbReference type="Rhea" id="RHEA:26297"/>
        <dbReference type="Rhea" id="RHEA-COMP:12909"/>
        <dbReference type="Rhea" id="RHEA-COMP:19908"/>
        <dbReference type="ChEBI" id="CHEBI:15377"/>
        <dbReference type="ChEBI" id="CHEBI:15378"/>
        <dbReference type="ChEBI" id="CHEBI:57792"/>
        <dbReference type="ChEBI" id="CHEBI:62899"/>
        <dbReference type="ChEBI" id="CHEBI:77846"/>
        <dbReference type="ChEBI" id="CHEBI:90778"/>
        <dbReference type="ChEBI" id="CHEBI:232372"/>
        <dbReference type="EC" id="2.8.1.10"/>
    </reaction>
</comment>
<comment type="pathway">
    <text evidence="1">Cofactor biosynthesis; thiamine diphosphate biosynthesis.</text>
</comment>
<comment type="subunit">
    <text evidence="1">Homotetramer. Forms heterodimers with either ThiH or ThiS.</text>
</comment>
<comment type="subcellular location">
    <subcellularLocation>
        <location evidence="1">Cytoplasm</location>
    </subcellularLocation>
</comment>
<comment type="similarity">
    <text evidence="1">Belongs to the ThiG family.</text>
</comment>
<proteinExistence type="inferred from homology"/>
<organism>
    <name type="scientific">Ectopseudomonas mendocina (strain ymp)</name>
    <name type="common">Pseudomonas mendocina</name>
    <dbReference type="NCBI Taxonomy" id="399739"/>
    <lineage>
        <taxon>Bacteria</taxon>
        <taxon>Pseudomonadati</taxon>
        <taxon>Pseudomonadota</taxon>
        <taxon>Gammaproteobacteria</taxon>
        <taxon>Pseudomonadales</taxon>
        <taxon>Pseudomonadaceae</taxon>
        <taxon>Ectopseudomonas</taxon>
    </lineage>
</organism>
<feature type="chain" id="PRO_1000026029" description="Thiazole synthase">
    <location>
        <begin position="1"/>
        <end position="264"/>
    </location>
</feature>
<feature type="active site" description="Schiff-base intermediate with DXP" evidence="1">
    <location>
        <position position="106"/>
    </location>
</feature>
<feature type="binding site" evidence="1">
    <location>
        <position position="167"/>
    </location>
    <ligand>
        <name>1-deoxy-D-xylulose 5-phosphate</name>
        <dbReference type="ChEBI" id="CHEBI:57792"/>
    </ligand>
</feature>
<feature type="binding site" evidence="1">
    <location>
        <begin position="193"/>
        <end position="194"/>
    </location>
    <ligand>
        <name>1-deoxy-D-xylulose 5-phosphate</name>
        <dbReference type="ChEBI" id="CHEBI:57792"/>
    </ligand>
</feature>
<feature type="binding site" evidence="1">
    <location>
        <begin position="215"/>
        <end position="216"/>
    </location>
    <ligand>
        <name>1-deoxy-D-xylulose 5-phosphate</name>
        <dbReference type="ChEBI" id="CHEBI:57792"/>
    </ligand>
</feature>
<reference key="1">
    <citation type="submission" date="2007-04" db="EMBL/GenBank/DDBJ databases">
        <title>Complete sequence of Pseudomonas mendocina ymp.</title>
        <authorList>
            <consortium name="US DOE Joint Genome Institute"/>
            <person name="Copeland A."/>
            <person name="Lucas S."/>
            <person name="Lapidus A."/>
            <person name="Barry K."/>
            <person name="Glavina del Rio T."/>
            <person name="Dalin E."/>
            <person name="Tice H."/>
            <person name="Pitluck S."/>
            <person name="Kiss H."/>
            <person name="Brettin T."/>
            <person name="Detter J.C."/>
            <person name="Bruce D."/>
            <person name="Han C."/>
            <person name="Schmutz J."/>
            <person name="Larimer F."/>
            <person name="Land M."/>
            <person name="Hauser L."/>
            <person name="Kyrpides N."/>
            <person name="Mikhailova N."/>
            <person name="Hersman L."/>
            <person name="Dubois J."/>
            <person name="Maurice P."/>
            <person name="Richardson P."/>
        </authorList>
    </citation>
    <scope>NUCLEOTIDE SEQUENCE [LARGE SCALE GENOMIC DNA]</scope>
    <source>
        <strain>ymp</strain>
    </source>
</reference>
<keyword id="KW-0963">Cytoplasm</keyword>
<keyword id="KW-0704">Schiff base</keyword>
<keyword id="KW-0784">Thiamine biosynthesis</keyword>
<keyword id="KW-0808">Transferase</keyword>
<sequence>MSQVRSDKPFTLAGRTYQSRLLVGTGKYKDMDETRDAIAASGAEIVTVAVRRTNIGQNPGEPNLLDVISPEQYTILPNTAGCYDAAEAVRTCRLARELLDGHKLVKLEVLADQKTLFPNVIETIKAAEILVKDGFDVMVYTSDDPIIARQLAEIGCIAVMPLAGLIGSGLGICNPYNLRIILEEAKVPVLVDAGVGTASDATIAMELGCEAVLLNSAIAHAQDPILMARAMKHAVEAGRLAYLAGRMPKKLYASASSPLDGLIK</sequence>
<dbReference type="EC" id="2.8.1.10" evidence="1"/>
<dbReference type="EMBL" id="CP000680">
    <property type="protein sequence ID" value="ABP86914.1"/>
    <property type="molecule type" value="Genomic_DNA"/>
</dbReference>
<dbReference type="SMR" id="A4XZZ8"/>
<dbReference type="STRING" id="399739.Pmen_4167"/>
<dbReference type="KEGG" id="pmy:Pmen_4167"/>
<dbReference type="PATRIC" id="fig|399739.8.peg.4218"/>
<dbReference type="eggNOG" id="COG2022">
    <property type="taxonomic scope" value="Bacteria"/>
</dbReference>
<dbReference type="HOGENOM" id="CLU_062233_1_1_6"/>
<dbReference type="OrthoDB" id="9805935at2"/>
<dbReference type="UniPathway" id="UPA00060"/>
<dbReference type="GO" id="GO:0005737">
    <property type="term" value="C:cytoplasm"/>
    <property type="evidence" value="ECO:0007669"/>
    <property type="project" value="UniProtKB-SubCell"/>
</dbReference>
<dbReference type="GO" id="GO:1990107">
    <property type="term" value="F:thiazole synthase activity"/>
    <property type="evidence" value="ECO:0007669"/>
    <property type="project" value="UniProtKB-EC"/>
</dbReference>
<dbReference type="GO" id="GO:0009229">
    <property type="term" value="P:thiamine diphosphate biosynthetic process"/>
    <property type="evidence" value="ECO:0007669"/>
    <property type="project" value="UniProtKB-UniRule"/>
</dbReference>
<dbReference type="CDD" id="cd04728">
    <property type="entry name" value="ThiG"/>
    <property type="match status" value="1"/>
</dbReference>
<dbReference type="Gene3D" id="3.20.20.70">
    <property type="entry name" value="Aldolase class I"/>
    <property type="match status" value="1"/>
</dbReference>
<dbReference type="HAMAP" id="MF_00443">
    <property type="entry name" value="ThiG"/>
    <property type="match status" value="1"/>
</dbReference>
<dbReference type="InterPro" id="IPR013785">
    <property type="entry name" value="Aldolase_TIM"/>
</dbReference>
<dbReference type="InterPro" id="IPR033983">
    <property type="entry name" value="Thiazole_synthase_ThiG"/>
</dbReference>
<dbReference type="InterPro" id="IPR008867">
    <property type="entry name" value="ThiG"/>
</dbReference>
<dbReference type="PANTHER" id="PTHR34266">
    <property type="entry name" value="THIAZOLE SYNTHASE"/>
    <property type="match status" value="1"/>
</dbReference>
<dbReference type="PANTHER" id="PTHR34266:SF2">
    <property type="entry name" value="THIAZOLE SYNTHASE"/>
    <property type="match status" value="1"/>
</dbReference>
<dbReference type="Pfam" id="PF05690">
    <property type="entry name" value="ThiG"/>
    <property type="match status" value="1"/>
</dbReference>
<dbReference type="SUPFAM" id="SSF110399">
    <property type="entry name" value="ThiG-like"/>
    <property type="match status" value="1"/>
</dbReference>
<accession>A4XZZ8</accession>